<name>QUEC_BACSU</name>
<organism>
    <name type="scientific">Bacillus subtilis (strain 168)</name>
    <dbReference type="NCBI Taxonomy" id="224308"/>
    <lineage>
        <taxon>Bacteria</taxon>
        <taxon>Bacillati</taxon>
        <taxon>Bacillota</taxon>
        <taxon>Bacilli</taxon>
        <taxon>Bacillales</taxon>
        <taxon>Bacillaceae</taxon>
        <taxon>Bacillus</taxon>
    </lineage>
</organism>
<sequence>MKKEKAIVVFSGGQDSTTCLLWALKEFEEVETVTFHYNQRHSQEVEVAKSIAEKLGVKNHLLDMSLLNQLAPNALTRNDIEIEVKDGELPSTFVPGRNLVFLSFASILAYQIGARHIITGVCETDFSGYPDCRDEFVKSCNVTVNLAMEKPFVIHTPLMWLNKAETWKLADELGALDFVKNNTLTCYNGIIADGCGECPACHLRSKGYEEYMVMKGERA</sequence>
<gene>
    <name type="primary">queC</name>
    <name type="synonym">ykvJ</name>
    <name type="ordered locus">BSU13720</name>
</gene>
<comment type="function">
    <text evidence="1 3">Catalyzes the ATP-dependent conversion of 7-carboxy-7-deazaguanine (CDG) to 7-cyano-7-deazaguanine (preQ(0)). Uses ammonia as nitrogen donor.</text>
</comment>
<comment type="catalytic activity">
    <reaction evidence="3">
        <text>7-carboxy-7-deazaguanine + NH4(+) + ATP = 7-cyano-7-deazaguanine + ADP + phosphate + H2O + H(+)</text>
        <dbReference type="Rhea" id="RHEA:27982"/>
        <dbReference type="ChEBI" id="CHEBI:15377"/>
        <dbReference type="ChEBI" id="CHEBI:15378"/>
        <dbReference type="ChEBI" id="CHEBI:28938"/>
        <dbReference type="ChEBI" id="CHEBI:30616"/>
        <dbReference type="ChEBI" id="CHEBI:43474"/>
        <dbReference type="ChEBI" id="CHEBI:45075"/>
        <dbReference type="ChEBI" id="CHEBI:61036"/>
        <dbReference type="ChEBI" id="CHEBI:456216"/>
        <dbReference type="EC" id="6.3.4.20"/>
    </reaction>
</comment>
<comment type="cofactor">
    <cofactor evidence="2 3">
        <name>Zn(2+)</name>
        <dbReference type="ChEBI" id="CHEBI:29105"/>
    </cofactor>
    <text evidence="2 3">Binds 1 zinc ion per subunit.</text>
</comment>
<comment type="pathway">
    <text evidence="3">Purine metabolism; 7-cyano-7-deazaguanine biosynthesis.</text>
</comment>
<comment type="subunit">
    <text evidence="2">Homodimer.</text>
</comment>
<comment type="similarity">
    <text evidence="4">Belongs to the QueC family.</text>
</comment>
<reference key="1">
    <citation type="journal article" date="1997" name="Nature">
        <title>The complete genome sequence of the Gram-positive bacterium Bacillus subtilis.</title>
        <authorList>
            <person name="Kunst F."/>
            <person name="Ogasawara N."/>
            <person name="Moszer I."/>
            <person name="Albertini A.M."/>
            <person name="Alloni G."/>
            <person name="Azevedo V."/>
            <person name="Bertero M.G."/>
            <person name="Bessieres P."/>
            <person name="Bolotin A."/>
            <person name="Borchert S."/>
            <person name="Borriss R."/>
            <person name="Boursier L."/>
            <person name="Brans A."/>
            <person name="Braun M."/>
            <person name="Brignell S.C."/>
            <person name="Bron S."/>
            <person name="Brouillet S."/>
            <person name="Bruschi C.V."/>
            <person name="Caldwell B."/>
            <person name="Capuano V."/>
            <person name="Carter N.M."/>
            <person name="Choi S.-K."/>
            <person name="Codani J.-J."/>
            <person name="Connerton I.F."/>
            <person name="Cummings N.J."/>
            <person name="Daniel R.A."/>
            <person name="Denizot F."/>
            <person name="Devine K.M."/>
            <person name="Duesterhoeft A."/>
            <person name="Ehrlich S.D."/>
            <person name="Emmerson P.T."/>
            <person name="Entian K.-D."/>
            <person name="Errington J."/>
            <person name="Fabret C."/>
            <person name="Ferrari E."/>
            <person name="Foulger D."/>
            <person name="Fritz C."/>
            <person name="Fujita M."/>
            <person name="Fujita Y."/>
            <person name="Fuma S."/>
            <person name="Galizzi A."/>
            <person name="Galleron N."/>
            <person name="Ghim S.-Y."/>
            <person name="Glaser P."/>
            <person name="Goffeau A."/>
            <person name="Golightly E.J."/>
            <person name="Grandi G."/>
            <person name="Guiseppi G."/>
            <person name="Guy B.J."/>
            <person name="Haga K."/>
            <person name="Haiech J."/>
            <person name="Harwood C.R."/>
            <person name="Henaut A."/>
            <person name="Hilbert H."/>
            <person name="Holsappel S."/>
            <person name="Hosono S."/>
            <person name="Hullo M.-F."/>
            <person name="Itaya M."/>
            <person name="Jones L.-M."/>
            <person name="Joris B."/>
            <person name="Karamata D."/>
            <person name="Kasahara Y."/>
            <person name="Klaerr-Blanchard M."/>
            <person name="Klein C."/>
            <person name="Kobayashi Y."/>
            <person name="Koetter P."/>
            <person name="Koningstein G."/>
            <person name="Krogh S."/>
            <person name="Kumano M."/>
            <person name="Kurita K."/>
            <person name="Lapidus A."/>
            <person name="Lardinois S."/>
            <person name="Lauber J."/>
            <person name="Lazarevic V."/>
            <person name="Lee S.-M."/>
            <person name="Levine A."/>
            <person name="Liu H."/>
            <person name="Masuda S."/>
            <person name="Mauel C."/>
            <person name="Medigue C."/>
            <person name="Medina N."/>
            <person name="Mellado R.P."/>
            <person name="Mizuno M."/>
            <person name="Moestl D."/>
            <person name="Nakai S."/>
            <person name="Noback M."/>
            <person name="Noone D."/>
            <person name="O'Reilly M."/>
            <person name="Ogawa K."/>
            <person name="Ogiwara A."/>
            <person name="Oudega B."/>
            <person name="Park S.-H."/>
            <person name="Parro V."/>
            <person name="Pohl T.M."/>
            <person name="Portetelle D."/>
            <person name="Porwollik S."/>
            <person name="Prescott A.M."/>
            <person name="Presecan E."/>
            <person name="Pujic P."/>
            <person name="Purnelle B."/>
            <person name="Rapoport G."/>
            <person name="Rey M."/>
            <person name="Reynolds S."/>
            <person name="Rieger M."/>
            <person name="Rivolta C."/>
            <person name="Rocha E."/>
            <person name="Roche B."/>
            <person name="Rose M."/>
            <person name="Sadaie Y."/>
            <person name="Sato T."/>
            <person name="Scanlan E."/>
            <person name="Schleich S."/>
            <person name="Schroeter R."/>
            <person name="Scoffone F."/>
            <person name="Sekiguchi J."/>
            <person name="Sekowska A."/>
            <person name="Seror S.J."/>
            <person name="Serror P."/>
            <person name="Shin B.-S."/>
            <person name="Soldo B."/>
            <person name="Sorokin A."/>
            <person name="Tacconi E."/>
            <person name="Takagi T."/>
            <person name="Takahashi H."/>
            <person name="Takemaru K."/>
            <person name="Takeuchi M."/>
            <person name="Tamakoshi A."/>
            <person name="Tanaka T."/>
            <person name="Terpstra P."/>
            <person name="Tognoni A."/>
            <person name="Tosato V."/>
            <person name="Uchiyama S."/>
            <person name="Vandenbol M."/>
            <person name="Vannier F."/>
            <person name="Vassarotti A."/>
            <person name="Viari A."/>
            <person name="Wambutt R."/>
            <person name="Wedler E."/>
            <person name="Wedler H."/>
            <person name="Weitzenegger T."/>
            <person name="Winters P."/>
            <person name="Wipat A."/>
            <person name="Yamamoto H."/>
            <person name="Yamane K."/>
            <person name="Yasumoto K."/>
            <person name="Yata K."/>
            <person name="Yoshida K."/>
            <person name="Yoshikawa H.-F."/>
            <person name="Zumstein E."/>
            <person name="Yoshikawa H."/>
            <person name="Danchin A."/>
        </authorList>
    </citation>
    <scope>NUCLEOTIDE SEQUENCE [LARGE SCALE GENOMIC DNA]</scope>
    <source>
        <strain>168</strain>
    </source>
</reference>
<reference key="2">
    <citation type="journal article" date="2004" name="J. Biol. Chem.">
        <title>Identification of four genes necessary for biosynthesis of the modified nucleoside queuosine.</title>
        <authorList>
            <person name="Reader J.S."/>
            <person name="Metzgar D."/>
            <person name="Schimmel P."/>
            <person name="de Crecy-Lagard V."/>
        </authorList>
    </citation>
    <scope>FUNCTION IN QUEUOSINE BIOSYNTHESIS</scope>
    <scope>GENE NAME</scope>
</reference>
<reference key="3">
    <citation type="journal article" date="2009" name="Biochemistry">
        <title>The deazapurine biosynthetic pathway revealed: in vitro enzymatic synthesis of PreQ(0) from guanosine 5'-triphosphate in four steps.</title>
        <authorList>
            <person name="McCarty R.M."/>
            <person name="Somogyi A."/>
            <person name="Lin G."/>
            <person name="Jacobsen N.E."/>
            <person name="Bandarian V."/>
        </authorList>
    </citation>
    <scope>FUNCTION AS PREQ(0) SYNTHASE</scope>
    <scope>CATALYTIC ACTIVITY</scope>
    <scope>COFACTOR</scope>
    <scope>PATHWAY</scope>
    <source>
        <strain>168</strain>
    </source>
</reference>
<reference key="4">
    <citation type="journal article" date="2008" name="Proteins">
        <title>Crystal structure of QueC from Bacillus subtilis: an enzyme involved in preQ1 biosynthesis.</title>
        <authorList>
            <person name="Cicmil N."/>
            <person name="Huang R.H."/>
        </authorList>
    </citation>
    <scope>X-RAY CRYSTALLOGRAPHY (2.95 ANGSTROMS) IN COMPLEX WITH ZINC IONS AND ATP ANALOG</scope>
    <scope>COFACTOR</scope>
    <scope>SUBUNIT</scope>
</reference>
<accession>O31675</accession>
<proteinExistence type="evidence at protein level"/>
<evidence type="ECO:0000269" key="1">
    <source>
    </source>
</evidence>
<evidence type="ECO:0000269" key="2">
    <source>
    </source>
</evidence>
<evidence type="ECO:0000269" key="3">
    <source>
    </source>
</evidence>
<evidence type="ECO:0000305" key="4"/>
<evidence type="ECO:0007829" key="5">
    <source>
        <dbReference type="PDB" id="3BL5"/>
    </source>
</evidence>
<feature type="chain" id="PRO_0000246801" description="7-cyano-7-deazaguanine synthase">
    <location>
        <begin position="1"/>
        <end position="219"/>
    </location>
</feature>
<feature type="binding site" evidence="2">
    <location>
        <begin position="10"/>
        <end position="20"/>
    </location>
    <ligand>
        <name>ATP</name>
        <dbReference type="ChEBI" id="CHEBI:30616"/>
    </ligand>
</feature>
<feature type="binding site" evidence="2">
    <location>
        <position position="186"/>
    </location>
    <ligand>
        <name>Zn(2+)</name>
        <dbReference type="ChEBI" id="CHEBI:29105"/>
    </ligand>
</feature>
<feature type="binding site" evidence="2">
    <location>
        <position position="195"/>
    </location>
    <ligand>
        <name>Zn(2+)</name>
        <dbReference type="ChEBI" id="CHEBI:29105"/>
    </ligand>
</feature>
<feature type="binding site" evidence="2">
    <location>
        <position position="198"/>
    </location>
    <ligand>
        <name>Zn(2+)</name>
        <dbReference type="ChEBI" id="CHEBI:29105"/>
    </ligand>
</feature>
<feature type="binding site" evidence="2">
    <location>
        <position position="201"/>
    </location>
    <ligand>
        <name>Zn(2+)</name>
        <dbReference type="ChEBI" id="CHEBI:29105"/>
    </ligand>
</feature>
<feature type="strand" evidence="5">
    <location>
        <begin position="5"/>
        <end position="9"/>
    </location>
</feature>
<feature type="helix" evidence="5">
    <location>
        <begin position="14"/>
        <end position="26"/>
    </location>
</feature>
<feature type="strand" evidence="5">
    <location>
        <begin position="28"/>
        <end position="38"/>
    </location>
</feature>
<feature type="helix" evidence="5">
    <location>
        <begin position="43"/>
        <end position="53"/>
    </location>
</feature>
<feature type="strand" evidence="5">
    <location>
        <begin position="59"/>
        <end position="63"/>
    </location>
</feature>
<feature type="helix" evidence="5">
    <location>
        <begin position="65"/>
        <end position="70"/>
    </location>
</feature>
<feature type="helix" evidence="5">
    <location>
        <begin position="73"/>
        <end position="75"/>
    </location>
</feature>
<feature type="helix" evidence="5">
    <location>
        <begin position="97"/>
        <end position="112"/>
    </location>
</feature>
<feature type="strand" evidence="5">
    <location>
        <begin position="115"/>
        <end position="118"/>
    </location>
</feature>
<feature type="helix" evidence="5">
    <location>
        <begin position="130"/>
        <end position="132"/>
    </location>
</feature>
<feature type="helix" evidence="5">
    <location>
        <begin position="134"/>
        <end position="148"/>
    </location>
</feature>
<feature type="strand" evidence="5">
    <location>
        <begin position="153"/>
        <end position="155"/>
    </location>
</feature>
<feature type="turn" evidence="5">
    <location>
        <begin position="157"/>
        <end position="160"/>
    </location>
</feature>
<feature type="helix" evidence="5">
    <location>
        <begin position="163"/>
        <end position="172"/>
    </location>
</feature>
<feature type="helix" evidence="5">
    <location>
        <begin position="176"/>
        <end position="182"/>
    </location>
</feature>
<feature type="helix" evidence="5">
    <location>
        <begin position="199"/>
        <end position="213"/>
    </location>
</feature>
<keyword id="KW-0002">3D-structure</keyword>
<keyword id="KW-0067">ATP-binding</keyword>
<keyword id="KW-0436">Ligase</keyword>
<keyword id="KW-0479">Metal-binding</keyword>
<keyword id="KW-0547">Nucleotide-binding</keyword>
<keyword id="KW-0671">Queuosine biosynthesis</keyword>
<keyword id="KW-1185">Reference proteome</keyword>
<keyword id="KW-0862">Zinc</keyword>
<protein>
    <recommendedName>
        <fullName>7-cyano-7-deazaguanine synthase</fullName>
        <ecNumber evidence="3">6.3.4.20</ecNumber>
    </recommendedName>
    <alternativeName>
        <fullName>7-cyano-7-carbaguanine synthase</fullName>
    </alternativeName>
    <alternativeName>
        <fullName>PreQ(0) synthase</fullName>
    </alternativeName>
    <alternativeName>
        <fullName>Queuosine biosynthesis protein QueC</fullName>
    </alternativeName>
</protein>
<dbReference type="EC" id="6.3.4.20" evidence="3"/>
<dbReference type="EMBL" id="AL009126">
    <property type="protein sequence ID" value="CAB13245.1"/>
    <property type="molecule type" value="Genomic_DNA"/>
</dbReference>
<dbReference type="PIR" id="A69868">
    <property type="entry name" value="A69868"/>
</dbReference>
<dbReference type="RefSeq" id="NP_389255.1">
    <property type="nucleotide sequence ID" value="NC_000964.3"/>
</dbReference>
<dbReference type="RefSeq" id="WP_003245417.1">
    <property type="nucleotide sequence ID" value="NZ_OZ025638.1"/>
</dbReference>
<dbReference type="PDB" id="3BL5">
    <property type="method" value="X-ray"/>
    <property type="resolution" value="2.95 A"/>
    <property type="chains" value="A/B/C/D/E/F=1-219"/>
</dbReference>
<dbReference type="PDBsum" id="3BL5"/>
<dbReference type="SMR" id="O31675"/>
<dbReference type="FunCoup" id="O31675">
    <property type="interactions" value="210"/>
</dbReference>
<dbReference type="STRING" id="224308.BSU13720"/>
<dbReference type="PaxDb" id="224308-BSU13720"/>
<dbReference type="EnsemblBacteria" id="CAB13245">
    <property type="protein sequence ID" value="CAB13245"/>
    <property type="gene ID" value="BSU_13720"/>
</dbReference>
<dbReference type="GeneID" id="939292"/>
<dbReference type="KEGG" id="bsu:BSU13720"/>
<dbReference type="PATRIC" id="fig|224308.179.peg.1489"/>
<dbReference type="eggNOG" id="COG0603">
    <property type="taxonomic scope" value="Bacteria"/>
</dbReference>
<dbReference type="InParanoid" id="O31675"/>
<dbReference type="OrthoDB" id="9789567at2"/>
<dbReference type="PhylomeDB" id="O31675"/>
<dbReference type="BioCyc" id="BSUB:BSU13720-MONOMER"/>
<dbReference type="BioCyc" id="MetaCyc:BSU13720-MONOMER"/>
<dbReference type="BRENDA" id="6.3.4.20">
    <property type="organism ID" value="658"/>
</dbReference>
<dbReference type="UniPathway" id="UPA00391"/>
<dbReference type="EvolutionaryTrace" id="O31675"/>
<dbReference type="Proteomes" id="UP000001570">
    <property type="component" value="Chromosome"/>
</dbReference>
<dbReference type="GO" id="GO:0005524">
    <property type="term" value="F:ATP binding"/>
    <property type="evidence" value="ECO:0007669"/>
    <property type="project" value="UniProtKB-UniRule"/>
</dbReference>
<dbReference type="GO" id="GO:0016879">
    <property type="term" value="F:ligase activity, forming carbon-nitrogen bonds"/>
    <property type="evidence" value="ECO:0007669"/>
    <property type="project" value="UniProtKB-UniRule"/>
</dbReference>
<dbReference type="GO" id="GO:0008270">
    <property type="term" value="F:zinc ion binding"/>
    <property type="evidence" value="ECO:0007669"/>
    <property type="project" value="UniProtKB-UniRule"/>
</dbReference>
<dbReference type="GO" id="GO:0008616">
    <property type="term" value="P:queuosine biosynthetic process"/>
    <property type="evidence" value="ECO:0007669"/>
    <property type="project" value="UniProtKB-UniRule"/>
</dbReference>
<dbReference type="CDD" id="cd01995">
    <property type="entry name" value="QueC-like"/>
    <property type="match status" value="1"/>
</dbReference>
<dbReference type="FunFam" id="3.40.50.620:FF:000017">
    <property type="entry name" value="7-cyano-7-deazaguanine synthase"/>
    <property type="match status" value="1"/>
</dbReference>
<dbReference type="Gene3D" id="3.40.50.620">
    <property type="entry name" value="HUPs"/>
    <property type="match status" value="1"/>
</dbReference>
<dbReference type="HAMAP" id="MF_01633">
    <property type="entry name" value="QueC"/>
    <property type="match status" value="1"/>
</dbReference>
<dbReference type="InterPro" id="IPR018317">
    <property type="entry name" value="QueC"/>
</dbReference>
<dbReference type="InterPro" id="IPR014729">
    <property type="entry name" value="Rossmann-like_a/b/a_fold"/>
</dbReference>
<dbReference type="NCBIfam" id="TIGR00364">
    <property type="entry name" value="7-cyano-7-deazaguanine synthase QueC"/>
    <property type="match status" value="1"/>
</dbReference>
<dbReference type="PANTHER" id="PTHR42914">
    <property type="entry name" value="7-CYANO-7-DEAZAGUANINE SYNTHASE"/>
    <property type="match status" value="1"/>
</dbReference>
<dbReference type="PANTHER" id="PTHR42914:SF1">
    <property type="entry name" value="7-CYANO-7-DEAZAGUANINE SYNTHASE"/>
    <property type="match status" value="1"/>
</dbReference>
<dbReference type="Pfam" id="PF06508">
    <property type="entry name" value="QueC"/>
    <property type="match status" value="1"/>
</dbReference>
<dbReference type="PIRSF" id="PIRSF006293">
    <property type="entry name" value="ExsB"/>
    <property type="match status" value="1"/>
</dbReference>
<dbReference type="SUPFAM" id="SSF52402">
    <property type="entry name" value="Adenine nucleotide alpha hydrolases-like"/>
    <property type="match status" value="1"/>
</dbReference>